<organism>
    <name type="scientific">Porphyromonas gingivalis (strain ATCC BAA-308 / W83)</name>
    <dbReference type="NCBI Taxonomy" id="242619"/>
    <lineage>
        <taxon>Bacteria</taxon>
        <taxon>Pseudomonadati</taxon>
        <taxon>Bacteroidota</taxon>
        <taxon>Bacteroidia</taxon>
        <taxon>Bacteroidales</taxon>
        <taxon>Porphyromonadaceae</taxon>
        <taxon>Porphyromonas</taxon>
    </lineage>
</organism>
<accession>Q7MXR6</accession>
<feature type="chain" id="PRO_0000175865" description="Probable transcriptional regulatory protein PG_0097">
    <location>
        <begin position="1"/>
        <end position="242"/>
    </location>
</feature>
<keyword id="KW-0963">Cytoplasm</keyword>
<keyword id="KW-0238">DNA-binding</keyword>
<keyword id="KW-1185">Reference proteome</keyword>
<keyword id="KW-0804">Transcription</keyword>
<keyword id="KW-0805">Transcription regulation</keyword>
<sequence length="242" mass="27950">MGRAFEYRKARKMKRWGNMARVFTKLGKEITIAAKEGGPDVETNPRLRILVQTAKKENMPKENVERAIKKATSKDYTDYKEMNYEGYGPYGIAIFVETATDNTTRTVANVRSYFNKHGGSLGTSGSLEFLFQHKCVFHIVKKDDMDLESLELELIDYGVDELEEDENEIILYGDFSENSNIQKYLEDAGYEIASAEFVRIPNDTKEVTAEQREQIEKLIERIEEDEDVQNVFHNMKEEEGEE</sequence>
<proteinExistence type="inferred from homology"/>
<evidence type="ECO:0000255" key="1">
    <source>
        <dbReference type="HAMAP-Rule" id="MF_00693"/>
    </source>
</evidence>
<evidence type="ECO:0000305" key="2"/>
<dbReference type="EMBL" id="AE015924">
    <property type="protein sequence ID" value="AAQ65343.1"/>
    <property type="status" value="ALT_INIT"/>
    <property type="molecule type" value="Genomic_DNA"/>
</dbReference>
<dbReference type="RefSeq" id="WP_004583754.1">
    <property type="nucleotide sequence ID" value="NC_002950.2"/>
</dbReference>
<dbReference type="SMR" id="Q7MXR6"/>
<dbReference type="STRING" id="242619.PG_0097"/>
<dbReference type="EnsemblBacteria" id="AAQ65343">
    <property type="protein sequence ID" value="AAQ65343"/>
    <property type="gene ID" value="PG_0097"/>
</dbReference>
<dbReference type="GeneID" id="29257178"/>
<dbReference type="KEGG" id="pgi:PG_0097"/>
<dbReference type="eggNOG" id="COG0217">
    <property type="taxonomic scope" value="Bacteria"/>
</dbReference>
<dbReference type="HOGENOM" id="CLU_062974_3_0_10"/>
<dbReference type="Proteomes" id="UP000000588">
    <property type="component" value="Chromosome"/>
</dbReference>
<dbReference type="GO" id="GO:0005829">
    <property type="term" value="C:cytosol"/>
    <property type="evidence" value="ECO:0007669"/>
    <property type="project" value="TreeGrafter"/>
</dbReference>
<dbReference type="GO" id="GO:0003677">
    <property type="term" value="F:DNA binding"/>
    <property type="evidence" value="ECO:0007669"/>
    <property type="project" value="UniProtKB-UniRule"/>
</dbReference>
<dbReference type="GO" id="GO:0006355">
    <property type="term" value="P:regulation of DNA-templated transcription"/>
    <property type="evidence" value="ECO:0007669"/>
    <property type="project" value="UniProtKB-UniRule"/>
</dbReference>
<dbReference type="FunFam" id="1.10.10.200:FF:000004">
    <property type="entry name" value="Probable transcriptional regulatory protein BSBG_02618"/>
    <property type="match status" value="1"/>
</dbReference>
<dbReference type="Gene3D" id="1.10.10.200">
    <property type="match status" value="1"/>
</dbReference>
<dbReference type="Gene3D" id="3.30.70.980">
    <property type="match status" value="2"/>
</dbReference>
<dbReference type="HAMAP" id="MF_00693">
    <property type="entry name" value="Transcrip_reg_TACO1"/>
    <property type="match status" value="1"/>
</dbReference>
<dbReference type="InterPro" id="IPR017856">
    <property type="entry name" value="Integrase-like_N"/>
</dbReference>
<dbReference type="InterPro" id="IPR048300">
    <property type="entry name" value="TACO1_YebC-like_2nd/3rd_dom"/>
</dbReference>
<dbReference type="InterPro" id="IPR049083">
    <property type="entry name" value="TACO1_YebC_N"/>
</dbReference>
<dbReference type="InterPro" id="IPR002876">
    <property type="entry name" value="Transcrip_reg_TACO1-like"/>
</dbReference>
<dbReference type="InterPro" id="IPR026564">
    <property type="entry name" value="Transcrip_reg_TACO1-like_dom3"/>
</dbReference>
<dbReference type="InterPro" id="IPR029072">
    <property type="entry name" value="YebC-like"/>
</dbReference>
<dbReference type="NCBIfam" id="NF001030">
    <property type="entry name" value="PRK00110.1"/>
    <property type="match status" value="1"/>
</dbReference>
<dbReference type="NCBIfam" id="NF009044">
    <property type="entry name" value="PRK12378.1"/>
    <property type="match status" value="1"/>
</dbReference>
<dbReference type="NCBIfam" id="TIGR01033">
    <property type="entry name" value="YebC/PmpR family DNA-binding transcriptional regulator"/>
    <property type="match status" value="1"/>
</dbReference>
<dbReference type="PANTHER" id="PTHR12532:SF6">
    <property type="entry name" value="TRANSCRIPTIONAL REGULATORY PROTEIN YEBC-RELATED"/>
    <property type="match status" value="1"/>
</dbReference>
<dbReference type="PANTHER" id="PTHR12532">
    <property type="entry name" value="TRANSLATIONAL ACTIVATOR OF CYTOCHROME C OXIDASE 1"/>
    <property type="match status" value="1"/>
</dbReference>
<dbReference type="Pfam" id="PF20772">
    <property type="entry name" value="TACO1_YebC_N"/>
    <property type="match status" value="1"/>
</dbReference>
<dbReference type="Pfam" id="PF01709">
    <property type="entry name" value="Transcrip_reg"/>
    <property type="match status" value="1"/>
</dbReference>
<dbReference type="SUPFAM" id="SSF75625">
    <property type="entry name" value="YebC-like"/>
    <property type="match status" value="1"/>
</dbReference>
<protein>
    <recommendedName>
        <fullName evidence="1">Probable transcriptional regulatory protein PG_0097</fullName>
    </recommendedName>
</protein>
<comment type="subcellular location">
    <subcellularLocation>
        <location evidence="1">Cytoplasm</location>
    </subcellularLocation>
</comment>
<comment type="similarity">
    <text evidence="1">Belongs to the TACO1 family.</text>
</comment>
<comment type="sequence caution" evidence="2">
    <conflict type="erroneous initiation">
        <sequence resource="EMBL-CDS" id="AAQ65343"/>
    </conflict>
</comment>
<gene>
    <name type="ordered locus">PG_0097</name>
</gene>
<name>Y097_PORGI</name>
<reference key="1">
    <citation type="journal article" date="2003" name="J. Bacteriol.">
        <title>Complete genome sequence of the oral pathogenic bacterium Porphyromonas gingivalis strain W83.</title>
        <authorList>
            <person name="Nelson K.E."/>
            <person name="Fleischmann R.D."/>
            <person name="DeBoy R.T."/>
            <person name="Paulsen I.T."/>
            <person name="Fouts D.E."/>
            <person name="Eisen J.A."/>
            <person name="Daugherty S.C."/>
            <person name="Dodson R.J."/>
            <person name="Durkin A.S."/>
            <person name="Gwinn M.L."/>
            <person name="Haft D.H."/>
            <person name="Kolonay J.F."/>
            <person name="Nelson W.C."/>
            <person name="Mason T.M."/>
            <person name="Tallon L."/>
            <person name="Gray J."/>
            <person name="Granger D."/>
            <person name="Tettelin H."/>
            <person name="Dong H."/>
            <person name="Galvin J.L."/>
            <person name="Duncan M.J."/>
            <person name="Dewhirst F.E."/>
            <person name="Fraser C.M."/>
        </authorList>
    </citation>
    <scope>NUCLEOTIDE SEQUENCE [LARGE SCALE GENOMIC DNA]</scope>
    <source>
        <strain>ATCC BAA-308 / W83</strain>
    </source>
</reference>